<dbReference type="EMBL" id="U79725">
    <property type="protein sequence ID" value="AAC50957.1"/>
    <property type="molecule type" value="mRNA"/>
</dbReference>
<dbReference type="EMBL" id="AK312833">
    <property type="protein sequence ID" value="BAG35687.1"/>
    <property type="molecule type" value="mRNA"/>
</dbReference>
<dbReference type="EMBL" id="AL158837">
    <property type="status" value="NOT_ANNOTATED_CDS"/>
    <property type="molecule type" value="Genomic_DNA"/>
</dbReference>
<dbReference type="EMBL" id="CH471067">
    <property type="protein sequence ID" value="EAW90783.1"/>
    <property type="molecule type" value="Genomic_DNA"/>
</dbReference>
<dbReference type="EMBL" id="BC069705">
    <property type="protein sequence ID" value="AAH69705.1"/>
    <property type="molecule type" value="mRNA"/>
</dbReference>
<dbReference type="EMBL" id="BC069723">
    <property type="protein sequence ID" value="AAH69723.1"/>
    <property type="molecule type" value="mRNA"/>
</dbReference>
<dbReference type="EMBL" id="BC069745">
    <property type="protein sequence ID" value="AAH69745.1"/>
    <property type="molecule type" value="mRNA"/>
</dbReference>
<dbReference type="EMBL" id="BC069761">
    <property type="protein sequence ID" value="AAH69761.1"/>
    <property type="molecule type" value="mRNA"/>
</dbReference>
<dbReference type="EMBL" id="BC069789">
    <property type="protein sequence ID" value="AAH69789.1"/>
    <property type="molecule type" value="mRNA"/>
</dbReference>
<dbReference type="EMBL" id="BC074830">
    <property type="protein sequence ID" value="AAH74830.1"/>
    <property type="molecule type" value="mRNA"/>
</dbReference>
<dbReference type="EMBL" id="BC074876">
    <property type="protein sequence ID" value="AAH74876.1"/>
    <property type="molecule type" value="mRNA"/>
</dbReference>
<dbReference type="EMBL" id="BC107164">
    <property type="protein sequence ID" value="AAI07165.1"/>
    <property type="molecule type" value="mRNA"/>
</dbReference>
<dbReference type="EMBL" id="BC107165">
    <property type="protein sequence ID" value="AAI07166.1"/>
    <property type="molecule type" value="mRNA"/>
</dbReference>
<dbReference type="CCDS" id="CCDS1258.1"/>
<dbReference type="RefSeq" id="NP_005805.1">
    <property type="nucleotide sequence ID" value="NM_005814.3"/>
</dbReference>
<dbReference type="SMR" id="Q99795"/>
<dbReference type="BioGRID" id="115517">
    <property type="interactions" value="17"/>
</dbReference>
<dbReference type="FunCoup" id="Q99795">
    <property type="interactions" value="344"/>
</dbReference>
<dbReference type="IntAct" id="Q99795">
    <property type="interactions" value="14"/>
</dbReference>
<dbReference type="STRING" id="9606.ENSP00000356842"/>
<dbReference type="ChEMBL" id="CHEMBL3712927"/>
<dbReference type="GlyCosmos" id="Q99795">
    <property type="glycosylation" value="3 sites, No reported glycans"/>
</dbReference>
<dbReference type="GlyGen" id="Q99795">
    <property type="glycosylation" value="4 sites, 1 O-linked glycan (1 site)"/>
</dbReference>
<dbReference type="iPTMnet" id="Q99795"/>
<dbReference type="PhosphoSitePlus" id="Q99795"/>
<dbReference type="SwissPalm" id="Q99795"/>
<dbReference type="BioMuta" id="GPA33"/>
<dbReference type="DMDM" id="2842765"/>
<dbReference type="jPOST" id="Q99795"/>
<dbReference type="MassIVE" id="Q99795"/>
<dbReference type="PaxDb" id="9606-ENSP00000356842"/>
<dbReference type="PeptideAtlas" id="Q99795"/>
<dbReference type="ProteomicsDB" id="78476"/>
<dbReference type="ABCD" id="Q99795">
    <property type="antibodies" value="5 sequenced antibodies"/>
</dbReference>
<dbReference type="Antibodypedia" id="1116">
    <property type="antibodies" value="367 antibodies from 33 providers"/>
</dbReference>
<dbReference type="DNASU" id="10223"/>
<dbReference type="Ensembl" id="ENST00000367868.4">
    <property type="protein sequence ID" value="ENSP00000356842.3"/>
    <property type="gene ID" value="ENSG00000143167.12"/>
</dbReference>
<dbReference type="GeneID" id="10223"/>
<dbReference type="KEGG" id="hsa:10223"/>
<dbReference type="MANE-Select" id="ENST00000367868.4">
    <property type="protein sequence ID" value="ENSP00000356842.3"/>
    <property type="RefSeq nucleotide sequence ID" value="NM_005814.3"/>
    <property type="RefSeq protein sequence ID" value="NP_005805.1"/>
</dbReference>
<dbReference type="UCSC" id="uc001gea.2">
    <property type="organism name" value="human"/>
</dbReference>
<dbReference type="AGR" id="HGNC:4445"/>
<dbReference type="CTD" id="10223"/>
<dbReference type="DisGeNET" id="10223"/>
<dbReference type="GeneCards" id="GPA33"/>
<dbReference type="HGNC" id="HGNC:4445">
    <property type="gene designation" value="GPA33"/>
</dbReference>
<dbReference type="HPA" id="ENSG00000143167">
    <property type="expression patterns" value="Tissue enriched (intestine)"/>
</dbReference>
<dbReference type="MIM" id="602171">
    <property type="type" value="gene"/>
</dbReference>
<dbReference type="neXtProt" id="NX_Q99795"/>
<dbReference type="OpenTargets" id="ENSG00000143167"/>
<dbReference type="PharmGKB" id="PA28826"/>
<dbReference type="VEuPathDB" id="HostDB:ENSG00000143167"/>
<dbReference type="eggNOG" id="ENOG502QR0Y">
    <property type="taxonomic scope" value="Eukaryota"/>
</dbReference>
<dbReference type="GeneTree" id="ENSGT00940000160248"/>
<dbReference type="HOGENOM" id="CLU_040549_2_0_1"/>
<dbReference type="InParanoid" id="Q99795"/>
<dbReference type="OMA" id="TEMSGYY"/>
<dbReference type="OrthoDB" id="8825892at2759"/>
<dbReference type="PAN-GO" id="Q99795">
    <property type="GO annotations" value="1 GO annotation based on evolutionary models"/>
</dbReference>
<dbReference type="PhylomeDB" id="Q99795"/>
<dbReference type="TreeFam" id="TF330875"/>
<dbReference type="PathwayCommons" id="Q99795"/>
<dbReference type="SignaLink" id="Q99795"/>
<dbReference type="BioGRID-ORCS" id="10223">
    <property type="hits" value="7 hits in 1137 CRISPR screens"/>
</dbReference>
<dbReference type="ChiTaRS" id="GPA33">
    <property type="organism name" value="human"/>
</dbReference>
<dbReference type="GeneWiki" id="GPA33"/>
<dbReference type="GenomeRNAi" id="10223"/>
<dbReference type="Pharos" id="Q99795">
    <property type="development level" value="Tbio"/>
</dbReference>
<dbReference type="PRO" id="PR:Q99795"/>
<dbReference type="Proteomes" id="UP000005640">
    <property type="component" value="Chromosome 1"/>
</dbReference>
<dbReference type="RNAct" id="Q99795">
    <property type="molecule type" value="protein"/>
</dbReference>
<dbReference type="Bgee" id="ENSG00000143167">
    <property type="expression patterns" value="Expressed in ileal mucosa and 82 other cell types or tissues"/>
</dbReference>
<dbReference type="ExpressionAtlas" id="Q99795">
    <property type="expression patterns" value="baseline and differential"/>
</dbReference>
<dbReference type="GO" id="GO:0070062">
    <property type="term" value="C:extracellular exosome"/>
    <property type="evidence" value="ECO:0007005"/>
    <property type="project" value="UniProtKB"/>
</dbReference>
<dbReference type="GO" id="GO:0005886">
    <property type="term" value="C:plasma membrane"/>
    <property type="evidence" value="ECO:0000318"/>
    <property type="project" value="GO_Central"/>
</dbReference>
<dbReference type="GO" id="GO:0038023">
    <property type="term" value="F:signaling receptor activity"/>
    <property type="evidence" value="ECO:0000304"/>
    <property type="project" value="ProtInc"/>
</dbReference>
<dbReference type="FunFam" id="2.60.40.10:FF:001969">
    <property type="entry name" value="Cell surface A33 antigen"/>
    <property type="match status" value="1"/>
</dbReference>
<dbReference type="FunFam" id="2.60.40.10:FF:000095">
    <property type="entry name" value="immunoglobulin superfamily member 11 isoform X1"/>
    <property type="match status" value="1"/>
</dbReference>
<dbReference type="Gene3D" id="2.60.40.10">
    <property type="entry name" value="Immunoglobulins"/>
    <property type="match status" value="2"/>
</dbReference>
<dbReference type="InterPro" id="IPR042474">
    <property type="entry name" value="A33"/>
</dbReference>
<dbReference type="InterPro" id="IPR007110">
    <property type="entry name" value="Ig-like_dom"/>
</dbReference>
<dbReference type="InterPro" id="IPR036179">
    <property type="entry name" value="Ig-like_dom_sf"/>
</dbReference>
<dbReference type="InterPro" id="IPR013783">
    <property type="entry name" value="Ig-like_fold"/>
</dbReference>
<dbReference type="InterPro" id="IPR003599">
    <property type="entry name" value="Ig_sub"/>
</dbReference>
<dbReference type="InterPro" id="IPR003598">
    <property type="entry name" value="Ig_sub2"/>
</dbReference>
<dbReference type="InterPro" id="IPR013106">
    <property type="entry name" value="Ig_V-set"/>
</dbReference>
<dbReference type="PANTHER" id="PTHR44969">
    <property type="entry name" value="CELL SURFACE A33 ANTIGEN"/>
    <property type="match status" value="1"/>
</dbReference>
<dbReference type="PANTHER" id="PTHR44969:SF1">
    <property type="entry name" value="CELL SURFACE A33 ANTIGEN"/>
    <property type="match status" value="1"/>
</dbReference>
<dbReference type="Pfam" id="PF13927">
    <property type="entry name" value="Ig_3"/>
    <property type="match status" value="1"/>
</dbReference>
<dbReference type="Pfam" id="PF07686">
    <property type="entry name" value="V-set"/>
    <property type="match status" value="1"/>
</dbReference>
<dbReference type="SMART" id="SM00409">
    <property type="entry name" value="IG"/>
    <property type="match status" value="2"/>
</dbReference>
<dbReference type="SMART" id="SM00408">
    <property type="entry name" value="IGc2"/>
    <property type="match status" value="2"/>
</dbReference>
<dbReference type="SMART" id="SM00406">
    <property type="entry name" value="IGv"/>
    <property type="match status" value="1"/>
</dbReference>
<dbReference type="SUPFAM" id="SSF48726">
    <property type="entry name" value="Immunoglobulin"/>
    <property type="match status" value="2"/>
</dbReference>
<dbReference type="PROSITE" id="PS50835">
    <property type="entry name" value="IG_LIKE"/>
    <property type="match status" value="2"/>
</dbReference>
<protein>
    <recommendedName>
        <fullName>Cell surface A33 antigen</fullName>
    </recommendedName>
    <alternativeName>
        <fullName>Glycoprotein A33</fullName>
    </alternativeName>
</protein>
<accession>Q99795</accession>
<accession>Q5VZP6</accession>
<reference key="1">
    <citation type="journal article" date="1997" name="Proc. Natl. Acad. Sci. U.S.A.">
        <title>The human A33 antigen is a transmembrane glycoprotein and a novel member of the immunoglobulin superfamily.</title>
        <authorList>
            <person name="Heath J.K."/>
            <person name="White S.J."/>
            <person name="Johnstone C.N."/>
            <person name="Catimel B."/>
            <person name="Simpson R.J."/>
            <person name="Moritz R.L."/>
            <person name="Tu G.-F."/>
            <person name="Ji H."/>
            <person name="Whitehead R.H."/>
            <person name="Groenen L.C."/>
            <person name="Scott A.M."/>
            <person name="Ritter G."/>
            <person name="Cohen L."/>
            <person name="Welt S."/>
            <person name="Old L.J."/>
            <person name="Nice E.C."/>
            <person name="Burgess A.W."/>
        </authorList>
    </citation>
    <scope>NUCLEOTIDE SEQUENCE [MRNA]</scope>
    <scope>PARTIAL PROTEIN SEQUENCE</scope>
    <source>
        <tissue>Colon carcinoma</tissue>
    </source>
</reference>
<reference key="2">
    <citation type="journal article" date="2004" name="Nat. Genet.">
        <title>Complete sequencing and characterization of 21,243 full-length human cDNAs.</title>
        <authorList>
            <person name="Ota T."/>
            <person name="Suzuki Y."/>
            <person name="Nishikawa T."/>
            <person name="Otsuki T."/>
            <person name="Sugiyama T."/>
            <person name="Irie R."/>
            <person name="Wakamatsu A."/>
            <person name="Hayashi K."/>
            <person name="Sato H."/>
            <person name="Nagai K."/>
            <person name="Kimura K."/>
            <person name="Makita H."/>
            <person name="Sekine M."/>
            <person name="Obayashi M."/>
            <person name="Nishi T."/>
            <person name="Shibahara T."/>
            <person name="Tanaka T."/>
            <person name="Ishii S."/>
            <person name="Yamamoto J."/>
            <person name="Saito K."/>
            <person name="Kawai Y."/>
            <person name="Isono Y."/>
            <person name="Nakamura Y."/>
            <person name="Nagahari K."/>
            <person name="Murakami K."/>
            <person name="Yasuda T."/>
            <person name="Iwayanagi T."/>
            <person name="Wagatsuma M."/>
            <person name="Shiratori A."/>
            <person name="Sudo H."/>
            <person name="Hosoiri T."/>
            <person name="Kaku Y."/>
            <person name="Kodaira H."/>
            <person name="Kondo H."/>
            <person name="Sugawara M."/>
            <person name="Takahashi M."/>
            <person name="Kanda K."/>
            <person name="Yokoi T."/>
            <person name="Furuya T."/>
            <person name="Kikkawa E."/>
            <person name="Omura Y."/>
            <person name="Abe K."/>
            <person name="Kamihara K."/>
            <person name="Katsuta N."/>
            <person name="Sato K."/>
            <person name="Tanikawa M."/>
            <person name="Yamazaki M."/>
            <person name="Ninomiya K."/>
            <person name="Ishibashi T."/>
            <person name="Yamashita H."/>
            <person name="Murakawa K."/>
            <person name="Fujimori K."/>
            <person name="Tanai H."/>
            <person name="Kimata M."/>
            <person name="Watanabe M."/>
            <person name="Hiraoka S."/>
            <person name="Chiba Y."/>
            <person name="Ishida S."/>
            <person name="Ono Y."/>
            <person name="Takiguchi S."/>
            <person name="Watanabe S."/>
            <person name="Yosida M."/>
            <person name="Hotuta T."/>
            <person name="Kusano J."/>
            <person name="Kanehori K."/>
            <person name="Takahashi-Fujii A."/>
            <person name="Hara H."/>
            <person name="Tanase T.-O."/>
            <person name="Nomura Y."/>
            <person name="Togiya S."/>
            <person name="Komai F."/>
            <person name="Hara R."/>
            <person name="Takeuchi K."/>
            <person name="Arita M."/>
            <person name="Imose N."/>
            <person name="Musashino K."/>
            <person name="Yuuki H."/>
            <person name="Oshima A."/>
            <person name="Sasaki N."/>
            <person name="Aotsuka S."/>
            <person name="Yoshikawa Y."/>
            <person name="Matsunawa H."/>
            <person name="Ichihara T."/>
            <person name="Shiohata N."/>
            <person name="Sano S."/>
            <person name="Moriya S."/>
            <person name="Momiyama H."/>
            <person name="Satoh N."/>
            <person name="Takami S."/>
            <person name="Terashima Y."/>
            <person name="Suzuki O."/>
            <person name="Nakagawa S."/>
            <person name="Senoh A."/>
            <person name="Mizoguchi H."/>
            <person name="Goto Y."/>
            <person name="Shimizu F."/>
            <person name="Wakebe H."/>
            <person name="Hishigaki H."/>
            <person name="Watanabe T."/>
            <person name="Sugiyama A."/>
            <person name="Takemoto M."/>
            <person name="Kawakami B."/>
            <person name="Yamazaki M."/>
            <person name="Watanabe K."/>
            <person name="Kumagai A."/>
            <person name="Itakura S."/>
            <person name="Fukuzumi Y."/>
            <person name="Fujimori Y."/>
            <person name="Komiyama M."/>
            <person name="Tashiro H."/>
            <person name="Tanigami A."/>
            <person name="Fujiwara T."/>
            <person name="Ono T."/>
            <person name="Yamada K."/>
            <person name="Fujii Y."/>
            <person name="Ozaki K."/>
            <person name="Hirao M."/>
            <person name="Ohmori Y."/>
            <person name="Kawabata A."/>
            <person name="Hikiji T."/>
            <person name="Kobatake N."/>
            <person name="Inagaki H."/>
            <person name="Ikema Y."/>
            <person name="Okamoto S."/>
            <person name="Okitani R."/>
            <person name="Kawakami T."/>
            <person name="Noguchi S."/>
            <person name="Itoh T."/>
            <person name="Shigeta K."/>
            <person name="Senba T."/>
            <person name="Matsumura K."/>
            <person name="Nakajima Y."/>
            <person name="Mizuno T."/>
            <person name="Morinaga M."/>
            <person name="Sasaki M."/>
            <person name="Togashi T."/>
            <person name="Oyama M."/>
            <person name="Hata H."/>
            <person name="Watanabe M."/>
            <person name="Komatsu T."/>
            <person name="Mizushima-Sugano J."/>
            <person name="Satoh T."/>
            <person name="Shirai Y."/>
            <person name="Takahashi Y."/>
            <person name="Nakagawa K."/>
            <person name="Okumura K."/>
            <person name="Nagase T."/>
            <person name="Nomura N."/>
            <person name="Kikuchi H."/>
            <person name="Masuho Y."/>
            <person name="Yamashita R."/>
            <person name="Nakai K."/>
            <person name="Yada T."/>
            <person name="Nakamura Y."/>
            <person name="Ohara O."/>
            <person name="Isogai T."/>
            <person name="Sugano S."/>
        </authorList>
    </citation>
    <scope>NUCLEOTIDE SEQUENCE [LARGE SCALE MRNA]</scope>
    <source>
        <tissue>Thymus</tissue>
    </source>
</reference>
<reference key="3">
    <citation type="journal article" date="2006" name="Nature">
        <title>The DNA sequence and biological annotation of human chromosome 1.</title>
        <authorList>
            <person name="Gregory S.G."/>
            <person name="Barlow K.F."/>
            <person name="McLay K.E."/>
            <person name="Kaul R."/>
            <person name="Swarbreck D."/>
            <person name="Dunham A."/>
            <person name="Scott C.E."/>
            <person name="Howe K.L."/>
            <person name="Woodfine K."/>
            <person name="Spencer C.C.A."/>
            <person name="Jones M.C."/>
            <person name="Gillson C."/>
            <person name="Searle S."/>
            <person name="Zhou Y."/>
            <person name="Kokocinski F."/>
            <person name="McDonald L."/>
            <person name="Evans R."/>
            <person name="Phillips K."/>
            <person name="Atkinson A."/>
            <person name="Cooper R."/>
            <person name="Jones C."/>
            <person name="Hall R.E."/>
            <person name="Andrews T.D."/>
            <person name="Lloyd C."/>
            <person name="Ainscough R."/>
            <person name="Almeida J.P."/>
            <person name="Ambrose K.D."/>
            <person name="Anderson F."/>
            <person name="Andrew R.W."/>
            <person name="Ashwell R.I.S."/>
            <person name="Aubin K."/>
            <person name="Babbage A.K."/>
            <person name="Bagguley C.L."/>
            <person name="Bailey J."/>
            <person name="Beasley H."/>
            <person name="Bethel G."/>
            <person name="Bird C.P."/>
            <person name="Bray-Allen S."/>
            <person name="Brown J.Y."/>
            <person name="Brown A.J."/>
            <person name="Buckley D."/>
            <person name="Burton J."/>
            <person name="Bye J."/>
            <person name="Carder C."/>
            <person name="Chapman J.C."/>
            <person name="Clark S.Y."/>
            <person name="Clarke G."/>
            <person name="Clee C."/>
            <person name="Cobley V."/>
            <person name="Collier R.E."/>
            <person name="Corby N."/>
            <person name="Coville G.J."/>
            <person name="Davies J."/>
            <person name="Deadman R."/>
            <person name="Dunn M."/>
            <person name="Earthrowl M."/>
            <person name="Ellington A.G."/>
            <person name="Errington H."/>
            <person name="Frankish A."/>
            <person name="Frankland J."/>
            <person name="French L."/>
            <person name="Garner P."/>
            <person name="Garnett J."/>
            <person name="Gay L."/>
            <person name="Ghori M.R.J."/>
            <person name="Gibson R."/>
            <person name="Gilby L.M."/>
            <person name="Gillett W."/>
            <person name="Glithero R.J."/>
            <person name="Grafham D.V."/>
            <person name="Griffiths C."/>
            <person name="Griffiths-Jones S."/>
            <person name="Grocock R."/>
            <person name="Hammond S."/>
            <person name="Harrison E.S.I."/>
            <person name="Hart E."/>
            <person name="Haugen E."/>
            <person name="Heath P.D."/>
            <person name="Holmes S."/>
            <person name="Holt K."/>
            <person name="Howden P.J."/>
            <person name="Hunt A.R."/>
            <person name="Hunt S.E."/>
            <person name="Hunter G."/>
            <person name="Isherwood J."/>
            <person name="James R."/>
            <person name="Johnson C."/>
            <person name="Johnson D."/>
            <person name="Joy A."/>
            <person name="Kay M."/>
            <person name="Kershaw J.K."/>
            <person name="Kibukawa M."/>
            <person name="Kimberley A.M."/>
            <person name="King A."/>
            <person name="Knights A.J."/>
            <person name="Lad H."/>
            <person name="Laird G."/>
            <person name="Lawlor S."/>
            <person name="Leongamornlert D.A."/>
            <person name="Lloyd D.M."/>
            <person name="Loveland J."/>
            <person name="Lovell J."/>
            <person name="Lush M.J."/>
            <person name="Lyne R."/>
            <person name="Martin S."/>
            <person name="Mashreghi-Mohammadi M."/>
            <person name="Matthews L."/>
            <person name="Matthews N.S.W."/>
            <person name="McLaren S."/>
            <person name="Milne S."/>
            <person name="Mistry S."/>
            <person name="Moore M.J.F."/>
            <person name="Nickerson T."/>
            <person name="O'Dell C.N."/>
            <person name="Oliver K."/>
            <person name="Palmeiri A."/>
            <person name="Palmer S.A."/>
            <person name="Parker A."/>
            <person name="Patel D."/>
            <person name="Pearce A.V."/>
            <person name="Peck A.I."/>
            <person name="Pelan S."/>
            <person name="Phelps K."/>
            <person name="Phillimore B.J."/>
            <person name="Plumb R."/>
            <person name="Rajan J."/>
            <person name="Raymond C."/>
            <person name="Rouse G."/>
            <person name="Saenphimmachak C."/>
            <person name="Sehra H.K."/>
            <person name="Sheridan E."/>
            <person name="Shownkeen R."/>
            <person name="Sims S."/>
            <person name="Skuce C.D."/>
            <person name="Smith M."/>
            <person name="Steward C."/>
            <person name="Subramanian S."/>
            <person name="Sycamore N."/>
            <person name="Tracey A."/>
            <person name="Tromans A."/>
            <person name="Van Helmond Z."/>
            <person name="Wall M."/>
            <person name="Wallis J.M."/>
            <person name="White S."/>
            <person name="Whitehead S.L."/>
            <person name="Wilkinson J.E."/>
            <person name="Willey D.L."/>
            <person name="Williams H."/>
            <person name="Wilming L."/>
            <person name="Wray P.W."/>
            <person name="Wu Z."/>
            <person name="Coulson A."/>
            <person name="Vaudin M."/>
            <person name="Sulston J.E."/>
            <person name="Durbin R.M."/>
            <person name="Hubbard T."/>
            <person name="Wooster R."/>
            <person name="Dunham I."/>
            <person name="Carter N.P."/>
            <person name="McVean G."/>
            <person name="Ross M.T."/>
            <person name="Harrow J."/>
            <person name="Olson M.V."/>
            <person name="Beck S."/>
            <person name="Rogers J."/>
            <person name="Bentley D.R."/>
        </authorList>
    </citation>
    <scope>NUCLEOTIDE SEQUENCE [LARGE SCALE GENOMIC DNA]</scope>
</reference>
<reference key="4">
    <citation type="submission" date="2005-07" db="EMBL/GenBank/DDBJ databases">
        <authorList>
            <person name="Mural R.J."/>
            <person name="Istrail S."/>
            <person name="Sutton G."/>
            <person name="Florea L."/>
            <person name="Halpern A.L."/>
            <person name="Mobarry C.M."/>
            <person name="Lippert R."/>
            <person name="Walenz B."/>
            <person name="Shatkay H."/>
            <person name="Dew I."/>
            <person name="Miller J.R."/>
            <person name="Flanigan M.J."/>
            <person name="Edwards N.J."/>
            <person name="Bolanos R."/>
            <person name="Fasulo D."/>
            <person name="Halldorsson B.V."/>
            <person name="Hannenhalli S."/>
            <person name="Turner R."/>
            <person name="Yooseph S."/>
            <person name="Lu F."/>
            <person name="Nusskern D.R."/>
            <person name="Shue B.C."/>
            <person name="Zheng X.H."/>
            <person name="Zhong F."/>
            <person name="Delcher A.L."/>
            <person name="Huson D.H."/>
            <person name="Kravitz S.A."/>
            <person name="Mouchard L."/>
            <person name="Reinert K."/>
            <person name="Remington K.A."/>
            <person name="Clark A.G."/>
            <person name="Waterman M.S."/>
            <person name="Eichler E.E."/>
            <person name="Adams M.D."/>
            <person name="Hunkapiller M.W."/>
            <person name="Myers E.W."/>
            <person name="Venter J.C."/>
        </authorList>
    </citation>
    <scope>NUCLEOTIDE SEQUENCE [LARGE SCALE GENOMIC DNA]</scope>
</reference>
<reference key="5">
    <citation type="journal article" date="2004" name="Genome Res.">
        <title>The status, quality, and expansion of the NIH full-length cDNA project: the Mammalian Gene Collection (MGC).</title>
        <authorList>
            <consortium name="The MGC Project Team"/>
        </authorList>
    </citation>
    <scope>NUCLEOTIDE SEQUENCE [LARGE SCALE MRNA]</scope>
    <source>
        <tissue>Lung</tissue>
    </source>
</reference>
<reference key="6">
    <citation type="journal article" date="1997" name="Biochem. Biophys. Res. Commun.">
        <title>Characterization of posttranslational modifications of human A33 antigen, a novel palmitoylated surface glycoprotein of human gastrointestinal epithelium.</title>
        <authorList>
            <person name="Ritter G."/>
            <person name="Cohen L.S."/>
            <person name="Nice E.C."/>
            <person name="Catimel B."/>
            <person name="Burgess A.W."/>
            <person name="Moritz R.L."/>
            <person name="Ji H."/>
            <person name="Heath J.K."/>
            <person name="White S.J."/>
            <person name="Welt S."/>
            <person name="Old L.J."/>
            <person name="Simpson R.J."/>
        </authorList>
    </citation>
    <scope>GLYCOSYLATION AT ASN-112</scope>
    <scope>PALMITOYLATION</scope>
</reference>
<sequence>MVGKMWPVLWTLCAVRVTVDAISVETPQDVLRASQGKSVTLPCTYHTSTSSREGLIQWDKLLLTHTERVVIWPFSNKNYIHGELYKNRVSISNNAEQSDASITIDQLTMADNGTYECSVSLMSDLEGNTKSRVRLLVLVPPSKPECGIEGETIIGNNIQLTCQSKEGSPTPQYSWKRYNILNQEQPLAQPASGQPVSLKNISTDTSGYYICTSSNEEGTQFCNITVAVRSPSMNVALYVGIAVGVVAALIIIGIIIYCCCCRGKDDNTEDKEDARPNREAYEEPPEQLRELSREREEEDDYRQEEQRSTGRESPDHLDQ</sequence>
<gene>
    <name type="primary">GPA33</name>
</gene>
<name>GPA33_HUMAN</name>
<comment type="function">
    <text>May play a role in cell-cell recognition and signaling.</text>
</comment>
<comment type="interaction">
    <interactant intactId="EBI-4289554">
        <id>Q99795</id>
    </interactant>
    <interactant intactId="EBI-3907816">
        <id>P54852</id>
        <label>EMP3</label>
    </interactant>
    <organismsDiffer>false</organismsDiffer>
    <experiments>3</experiments>
</comment>
<comment type="interaction">
    <interactant intactId="EBI-4289554">
        <id>Q99795</id>
    </interactant>
    <interactant intactId="EBI-12279764">
        <id>O75355-2</id>
        <label>ENTPD3</label>
    </interactant>
    <organismsDiffer>false</organismsDiffer>
    <experiments>3</experiments>
</comment>
<comment type="interaction">
    <interactant intactId="EBI-4289554">
        <id>Q99795</id>
    </interactant>
    <interactant intactId="EBI-750078">
        <id>Q13021</id>
        <label>MALL</label>
    </interactant>
    <organismsDiffer>false</organismsDiffer>
    <experiments>3</experiments>
</comment>
<comment type="interaction">
    <interactant intactId="EBI-4289554">
        <id>Q99795</id>
    </interactant>
    <interactant intactId="EBI-10264528">
        <id>Q8IZ57</id>
        <label>NRSN1</label>
    </interactant>
    <organismsDiffer>false</organismsDiffer>
    <experiments>3</experiments>
</comment>
<comment type="interaction">
    <interactant intactId="EBI-4289554">
        <id>Q99795</id>
    </interactant>
    <interactant intactId="EBI-6380741">
        <id>P42857</id>
        <label>NSG1</label>
    </interactant>
    <organismsDiffer>false</organismsDiffer>
    <experiments>3</experiments>
</comment>
<comment type="interaction">
    <interactant intactId="EBI-4289554">
        <id>Q99795</id>
    </interactant>
    <interactant intactId="EBI-752420">
        <id>Q9NUX5</id>
        <label>POT1</label>
    </interactant>
    <organismsDiffer>false</organismsDiffer>
    <experiments>2</experiments>
</comment>
<comment type="interaction">
    <interactant intactId="EBI-4289554">
        <id>Q99795</id>
    </interactant>
    <interactant intactId="EBI-8640191">
        <id>Q9NRQ5</id>
        <label>SMCO4</label>
    </interactant>
    <organismsDiffer>false</organismsDiffer>
    <experiments>3</experiments>
</comment>
<comment type="interaction">
    <interactant intactId="EBI-4289554">
        <id>Q99795</id>
    </interactant>
    <interactant intactId="EBI-10179682">
        <id>O00526</id>
        <label>UPK2</label>
    </interactant>
    <organismsDiffer>false</organismsDiffer>
    <experiments>3</experiments>
</comment>
<comment type="subcellular location">
    <subcellularLocation>
        <location>Membrane</location>
        <topology>Single-pass type I membrane protein</topology>
    </subcellularLocation>
</comment>
<comment type="tissue specificity">
    <text>Expressed in normal gastrointestinal epithelium and in 95% of colon cancers.</text>
</comment>
<comment type="PTM">
    <text evidence="4">N-glycosylated, contains approximately 8 kDa of N-linked carbohydrate.</text>
</comment>
<comment type="PTM">
    <text evidence="4">Palmitoylated.</text>
</comment>
<comment type="online information" name="Atlas of Genetics and Cytogenetics in Oncology and Haematology">
    <link uri="https://atlasgeneticsoncology.org/gene/40735/GPA33"/>
</comment>
<evidence type="ECO:0000255" key="1"/>
<evidence type="ECO:0000255" key="2">
    <source>
        <dbReference type="PROSITE-ProRule" id="PRU00114"/>
    </source>
</evidence>
<evidence type="ECO:0000256" key="3">
    <source>
        <dbReference type="SAM" id="MobiDB-lite"/>
    </source>
</evidence>
<evidence type="ECO:0000269" key="4">
    <source>
    </source>
</evidence>
<organism>
    <name type="scientific">Homo sapiens</name>
    <name type="common">Human</name>
    <dbReference type="NCBI Taxonomy" id="9606"/>
    <lineage>
        <taxon>Eukaryota</taxon>
        <taxon>Metazoa</taxon>
        <taxon>Chordata</taxon>
        <taxon>Craniata</taxon>
        <taxon>Vertebrata</taxon>
        <taxon>Euteleostomi</taxon>
        <taxon>Mammalia</taxon>
        <taxon>Eutheria</taxon>
        <taxon>Euarchontoglires</taxon>
        <taxon>Primates</taxon>
        <taxon>Haplorrhini</taxon>
        <taxon>Catarrhini</taxon>
        <taxon>Hominidae</taxon>
        <taxon>Homo</taxon>
    </lineage>
</organism>
<keyword id="KW-0903">Direct protein sequencing</keyword>
<keyword id="KW-1015">Disulfide bond</keyword>
<keyword id="KW-0325">Glycoprotein</keyword>
<keyword id="KW-0393">Immunoglobulin domain</keyword>
<keyword id="KW-0449">Lipoprotein</keyword>
<keyword id="KW-0472">Membrane</keyword>
<keyword id="KW-0564">Palmitate</keyword>
<keyword id="KW-1267">Proteomics identification</keyword>
<keyword id="KW-1185">Reference proteome</keyword>
<keyword id="KW-0732">Signal</keyword>
<keyword id="KW-0812">Transmembrane</keyword>
<keyword id="KW-1133">Transmembrane helix</keyword>
<proteinExistence type="evidence at protein level"/>
<feature type="signal peptide">
    <location>
        <begin position="1"/>
        <end position="21"/>
    </location>
</feature>
<feature type="chain" id="PRO_0000014770" description="Cell surface A33 antigen">
    <location>
        <begin position="22"/>
        <end position="319"/>
    </location>
</feature>
<feature type="topological domain" description="Extracellular" evidence="1">
    <location>
        <begin position="22"/>
        <end position="235"/>
    </location>
</feature>
<feature type="transmembrane region" description="Helical" evidence="1">
    <location>
        <begin position="236"/>
        <end position="256"/>
    </location>
</feature>
<feature type="topological domain" description="Cytoplasmic" evidence="1">
    <location>
        <begin position="257"/>
        <end position="319"/>
    </location>
</feature>
<feature type="domain" description="Ig-like V-type">
    <location>
        <begin position="22"/>
        <end position="134"/>
    </location>
</feature>
<feature type="domain" description="Ig-like C2-type">
    <location>
        <begin position="140"/>
        <end position="227"/>
    </location>
</feature>
<feature type="region of interest" description="Disordered" evidence="3">
    <location>
        <begin position="267"/>
        <end position="319"/>
    </location>
</feature>
<feature type="compositionally biased region" description="Basic and acidic residues" evidence="3">
    <location>
        <begin position="267"/>
        <end position="295"/>
    </location>
</feature>
<feature type="compositionally biased region" description="Basic and acidic residues" evidence="3">
    <location>
        <begin position="303"/>
        <end position="319"/>
    </location>
</feature>
<feature type="glycosylation site" description="N-linked (GlcNAc...) asparagine" evidence="4">
    <location>
        <position position="112"/>
    </location>
</feature>
<feature type="glycosylation site" description="N-linked (GlcNAc...) asparagine" evidence="1">
    <location>
        <position position="200"/>
    </location>
</feature>
<feature type="glycosylation site" description="N-linked (GlcNAc...) asparagine" evidence="1">
    <location>
        <position position="223"/>
    </location>
</feature>
<feature type="disulfide bond" evidence="2">
    <location>
        <begin position="43"/>
        <end position="117"/>
    </location>
</feature>
<feature type="disulfide bond" evidence="2">
    <location>
        <begin position="146"/>
        <end position="222"/>
    </location>
</feature>
<feature type="disulfide bond" evidence="2">
    <location>
        <begin position="162"/>
        <end position="211"/>
    </location>
</feature>
<feature type="sequence variant" id="VAR_020079" description="In dbSNP:rs2274531.">
    <original>D</original>
    <variation>N</variation>
    <location>
        <position position="20"/>
    </location>
</feature>
<feature type="sequence variant" id="VAR_049874" description="In dbSNP:rs2228399.">
    <original>K</original>
    <variation>N</variation>
    <location>
        <position position="165"/>
    </location>
</feature>